<reference key="1">
    <citation type="journal article" date="2000" name="Science">
        <title>The genome sequence of Drosophila melanogaster.</title>
        <authorList>
            <person name="Adams M.D."/>
            <person name="Celniker S.E."/>
            <person name="Holt R.A."/>
            <person name="Evans C.A."/>
            <person name="Gocayne J.D."/>
            <person name="Amanatides P.G."/>
            <person name="Scherer S.E."/>
            <person name="Li P.W."/>
            <person name="Hoskins R.A."/>
            <person name="Galle R.F."/>
            <person name="George R.A."/>
            <person name="Lewis S.E."/>
            <person name="Richards S."/>
            <person name="Ashburner M."/>
            <person name="Henderson S.N."/>
            <person name="Sutton G.G."/>
            <person name="Wortman J.R."/>
            <person name="Yandell M.D."/>
            <person name="Zhang Q."/>
            <person name="Chen L.X."/>
            <person name="Brandon R.C."/>
            <person name="Rogers Y.-H.C."/>
            <person name="Blazej R.G."/>
            <person name="Champe M."/>
            <person name="Pfeiffer B.D."/>
            <person name="Wan K.H."/>
            <person name="Doyle C."/>
            <person name="Baxter E.G."/>
            <person name="Helt G."/>
            <person name="Nelson C.R."/>
            <person name="Miklos G.L.G."/>
            <person name="Abril J.F."/>
            <person name="Agbayani A."/>
            <person name="An H.-J."/>
            <person name="Andrews-Pfannkoch C."/>
            <person name="Baldwin D."/>
            <person name="Ballew R.M."/>
            <person name="Basu A."/>
            <person name="Baxendale J."/>
            <person name="Bayraktaroglu L."/>
            <person name="Beasley E.M."/>
            <person name="Beeson K.Y."/>
            <person name="Benos P.V."/>
            <person name="Berman B.P."/>
            <person name="Bhandari D."/>
            <person name="Bolshakov S."/>
            <person name="Borkova D."/>
            <person name="Botchan M.R."/>
            <person name="Bouck J."/>
            <person name="Brokstein P."/>
            <person name="Brottier P."/>
            <person name="Burtis K.C."/>
            <person name="Busam D.A."/>
            <person name="Butler H."/>
            <person name="Cadieu E."/>
            <person name="Center A."/>
            <person name="Chandra I."/>
            <person name="Cherry J.M."/>
            <person name="Cawley S."/>
            <person name="Dahlke C."/>
            <person name="Davenport L.B."/>
            <person name="Davies P."/>
            <person name="de Pablos B."/>
            <person name="Delcher A."/>
            <person name="Deng Z."/>
            <person name="Mays A.D."/>
            <person name="Dew I."/>
            <person name="Dietz S.M."/>
            <person name="Dodson K."/>
            <person name="Doup L.E."/>
            <person name="Downes M."/>
            <person name="Dugan-Rocha S."/>
            <person name="Dunkov B.C."/>
            <person name="Dunn P."/>
            <person name="Durbin K.J."/>
            <person name="Evangelista C.C."/>
            <person name="Ferraz C."/>
            <person name="Ferriera S."/>
            <person name="Fleischmann W."/>
            <person name="Fosler C."/>
            <person name="Gabrielian A.E."/>
            <person name="Garg N.S."/>
            <person name="Gelbart W.M."/>
            <person name="Glasser K."/>
            <person name="Glodek A."/>
            <person name="Gong F."/>
            <person name="Gorrell J.H."/>
            <person name="Gu Z."/>
            <person name="Guan P."/>
            <person name="Harris M."/>
            <person name="Harris N.L."/>
            <person name="Harvey D.A."/>
            <person name="Heiman T.J."/>
            <person name="Hernandez J.R."/>
            <person name="Houck J."/>
            <person name="Hostin D."/>
            <person name="Houston K.A."/>
            <person name="Howland T.J."/>
            <person name="Wei M.-H."/>
            <person name="Ibegwam C."/>
            <person name="Jalali M."/>
            <person name="Kalush F."/>
            <person name="Karpen G.H."/>
            <person name="Ke Z."/>
            <person name="Kennison J.A."/>
            <person name="Ketchum K.A."/>
            <person name="Kimmel B.E."/>
            <person name="Kodira C.D."/>
            <person name="Kraft C.L."/>
            <person name="Kravitz S."/>
            <person name="Kulp D."/>
            <person name="Lai Z."/>
            <person name="Lasko P."/>
            <person name="Lei Y."/>
            <person name="Levitsky A.A."/>
            <person name="Li J.H."/>
            <person name="Li Z."/>
            <person name="Liang Y."/>
            <person name="Lin X."/>
            <person name="Liu X."/>
            <person name="Mattei B."/>
            <person name="McIntosh T.C."/>
            <person name="McLeod M.P."/>
            <person name="McPherson D."/>
            <person name="Merkulov G."/>
            <person name="Milshina N.V."/>
            <person name="Mobarry C."/>
            <person name="Morris J."/>
            <person name="Moshrefi A."/>
            <person name="Mount S.M."/>
            <person name="Moy M."/>
            <person name="Murphy B."/>
            <person name="Murphy L."/>
            <person name="Muzny D.M."/>
            <person name="Nelson D.L."/>
            <person name="Nelson D.R."/>
            <person name="Nelson K.A."/>
            <person name="Nixon K."/>
            <person name="Nusskern D.R."/>
            <person name="Pacleb J.M."/>
            <person name="Palazzolo M."/>
            <person name="Pittman G.S."/>
            <person name="Pan S."/>
            <person name="Pollard J."/>
            <person name="Puri V."/>
            <person name="Reese M.G."/>
            <person name="Reinert K."/>
            <person name="Remington K."/>
            <person name="Saunders R.D.C."/>
            <person name="Scheeler F."/>
            <person name="Shen H."/>
            <person name="Shue B.C."/>
            <person name="Siden-Kiamos I."/>
            <person name="Simpson M."/>
            <person name="Skupski M.P."/>
            <person name="Smith T.J."/>
            <person name="Spier E."/>
            <person name="Spradling A.C."/>
            <person name="Stapleton M."/>
            <person name="Strong R."/>
            <person name="Sun E."/>
            <person name="Svirskas R."/>
            <person name="Tector C."/>
            <person name="Turner R."/>
            <person name="Venter E."/>
            <person name="Wang A.H."/>
            <person name="Wang X."/>
            <person name="Wang Z.-Y."/>
            <person name="Wassarman D.A."/>
            <person name="Weinstock G.M."/>
            <person name="Weissenbach J."/>
            <person name="Williams S.M."/>
            <person name="Woodage T."/>
            <person name="Worley K.C."/>
            <person name="Wu D."/>
            <person name="Yang S."/>
            <person name="Yao Q.A."/>
            <person name="Ye J."/>
            <person name="Yeh R.-F."/>
            <person name="Zaveri J.S."/>
            <person name="Zhan M."/>
            <person name="Zhang G."/>
            <person name="Zhao Q."/>
            <person name="Zheng L."/>
            <person name="Zheng X.H."/>
            <person name="Zhong F.N."/>
            <person name="Zhong W."/>
            <person name="Zhou X."/>
            <person name="Zhu S.C."/>
            <person name="Zhu X."/>
            <person name="Smith H.O."/>
            <person name="Gibbs R.A."/>
            <person name="Myers E.W."/>
            <person name="Rubin G.M."/>
            <person name="Venter J.C."/>
        </authorList>
    </citation>
    <scope>NUCLEOTIDE SEQUENCE [LARGE SCALE GENOMIC DNA]</scope>
    <source>
        <strain>Berkeley</strain>
    </source>
</reference>
<reference key="2">
    <citation type="journal article" date="2002" name="Genome Biol.">
        <title>Annotation of the Drosophila melanogaster euchromatic genome: a systematic review.</title>
        <authorList>
            <person name="Misra S."/>
            <person name="Crosby M.A."/>
            <person name="Mungall C.J."/>
            <person name="Matthews B.B."/>
            <person name="Campbell K.S."/>
            <person name="Hradecky P."/>
            <person name="Huang Y."/>
            <person name="Kaminker J.S."/>
            <person name="Millburn G.H."/>
            <person name="Prochnik S.E."/>
            <person name="Smith C.D."/>
            <person name="Tupy J.L."/>
            <person name="Whitfield E.J."/>
            <person name="Bayraktaroglu L."/>
            <person name="Berman B.P."/>
            <person name="Bettencourt B.R."/>
            <person name="Celniker S.E."/>
            <person name="de Grey A.D.N.J."/>
            <person name="Drysdale R.A."/>
            <person name="Harris N.L."/>
            <person name="Richter J."/>
            <person name="Russo S."/>
            <person name="Schroeder A.J."/>
            <person name="Shu S.Q."/>
            <person name="Stapleton M."/>
            <person name="Yamada C."/>
            <person name="Ashburner M."/>
            <person name="Gelbart W.M."/>
            <person name="Rubin G.M."/>
            <person name="Lewis S.E."/>
        </authorList>
    </citation>
    <scope>GENOME REANNOTATION</scope>
    <source>
        <strain>Berkeley</strain>
    </source>
</reference>
<reference key="3">
    <citation type="submission" date="2001-12" db="EMBL/GenBank/DDBJ databases">
        <authorList>
            <person name="Stapleton M."/>
            <person name="Brokstein P."/>
            <person name="Hong L."/>
            <person name="Agbayani A."/>
            <person name="Carlson J.W."/>
            <person name="Champe M."/>
            <person name="Chavez C."/>
            <person name="Dorsett V."/>
            <person name="Dresnek D."/>
            <person name="Farfan D."/>
            <person name="Frise E."/>
            <person name="George R.A."/>
            <person name="Gonzalez M."/>
            <person name="Guarin H."/>
            <person name="Kronmiller B."/>
            <person name="Li P.W."/>
            <person name="Liao G."/>
            <person name="Miranda A."/>
            <person name="Mungall C.J."/>
            <person name="Nunoo J."/>
            <person name="Pacleb J.M."/>
            <person name="Paragas V."/>
            <person name="Park S."/>
            <person name="Patel S."/>
            <person name="Phouanenavong S."/>
            <person name="Wan K.H."/>
            <person name="Yu C."/>
            <person name="Lewis S.E."/>
            <person name="Rubin G.M."/>
            <person name="Celniker S.E."/>
        </authorList>
    </citation>
    <scope>NUCLEOTIDE SEQUENCE [LARGE SCALE MRNA]</scope>
    <source>
        <strain>Berkeley</strain>
        <tissue>Embryo</tissue>
    </source>
</reference>
<dbReference type="EMBL" id="AE014298">
    <property type="protein sequence ID" value="AAF48662.2"/>
    <property type="molecule type" value="Genomic_DNA"/>
</dbReference>
<dbReference type="EMBL" id="AY070969">
    <property type="protein sequence ID" value="AAL48591.1"/>
    <property type="molecule type" value="mRNA"/>
</dbReference>
<dbReference type="RefSeq" id="NP_523379.2">
    <property type="nucleotide sequence ID" value="NM_078655.4"/>
</dbReference>
<dbReference type="SMR" id="Q9VXB5"/>
<dbReference type="BioGRID" id="58995">
    <property type="interactions" value="4"/>
</dbReference>
<dbReference type="FunCoup" id="Q9VXB5">
    <property type="interactions" value="1401"/>
</dbReference>
<dbReference type="IntAct" id="Q9VXB5">
    <property type="interactions" value="1"/>
</dbReference>
<dbReference type="STRING" id="7227.FBpp0074104"/>
<dbReference type="PaxDb" id="7227-FBpp0074104"/>
<dbReference type="DNASU" id="32662"/>
<dbReference type="EnsemblMetazoa" id="FBtr0074330">
    <property type="protein sequence ID" value="FBpp0074104"/>
    <property type="gene ID" value="FBgn0030786"/>
</dbReference>
<dbReference type="GeneID" id="32662"/>
<dbReference type="KEGG" id="dme:Dmel_CG4742"/>
<dbReference type="AGR" id="FB:FBgn0030786"/>
<dbReference type="CTD" id="29093"/>
<dbReference type="FlyBase" id="FBgn0030786">
    <property type="gene designation" value="mRpL22"/>
</dbReference>
<dbReference type="VEuPathDB" id="VectorBase:FBgn0030786"/>
<dbReference type="eggNOG" id="KOG1711">
    <property type="taxonomic scope" value="Eukaryota"/>
</dbReference>
<dbReference type="GeneTree" id="ENSGT00390000002110"/>
<dbReference type="HOGENOM" id="CLU_100005_0_0_1"/>
<dbReference type="InParanoid" id="Q9VXB5"/>
<dbReference type="OMA" id="HKVIRQM"/>
<dbReference type="OrthoDB" id="416470at2759"/>
<dbReference type="PhylomeDB" id="Q9VXB5"/>
<dbReference type="Reactome" id="R-DME-5389840">
    <property type="pathway name" value="Mitochondrial translation elongation"/>
</dbReference>
<dbReference type="Reactome" id="R-DME-5419276">
    <property type="pathway name" value="Mitochondrial translation termination"/>
</dbReference>
<dbReference type="BioGRID-ORCS" id="32662">
    <property type="hits" value="0 hits in 1 CRISPR screen"/>
</dbReference>
<dbReference type="GenomeRNAi" id="32662"/>
<dbReference type="PRO" id="PR:Q9VXB5"/>
<dbReference type="Proteomes" id="UP000000803">
    <property type="component" value="Chromosome X"/>
</dbReference>
<dbReference type="Bgee" id="FBgn0030786">
    <property type="expression patterns" value="Expressed in T neuron T5c (Drosophila) in embryonic/larval optic lobe (Drosophila) and 161 other cell types or tissues"/>
</dbReference>
<dbReference type="GO" id="GO:0005762">
    <property type="term" value="C:mitochondrial large ribosomal subunit"/>
    <property type="evidence" value="ECO:0000250"/>
    <property type="project" value="UniProtKB"/>
</dbReference>
<dbReference type="GO" id="GO:0005739">
    <property type="term" value="C:mitochondrion"/>
    <property type="evidence" value="ECO:0000250"/>
    <property type="project" value="UniProtKB"/>
</dbReference>
<dbReference type="GO" id="GO:0003735">
    <property type="term" value="F:structural constituent of ribosome"/>
    <property type="evidence" value="ECO:0000250"/>
    <property type="project" value="FlyBase"/>
</dbReference>
<dbReference type="GO" id="GO:0032543">
    <property type="term" value="P:mitochondrial translation"/>
    <property type="evidence" value="ECO:0000304"/>
    <property type="project" value="FlyBase"/>
</dbReference>
<dbReference type="GO" id="GO:0006412">
    <property type="term" value="P:translation"/>
    <property type="evidence" value="ECO:0000318"/>
    <property type="project" value="GO_Central"/>
</dbReference>
<dbReference type="CDD" id="cd00336">
    <property type="entry name" value="Ribosomal_L22"/>
    <property type="match status" value="1"/>
</dbReference>
<dbReference type="FunFam" id="3.90.470.10:FF:000009">
    <property type="entry name" value="39S ribosomal protein L22, mitochondrial"/>
    <property type="match status" value="1"/>
</dbReference>
<dbReference type="Gene3D" id="3.90.470.10">
    <property type="entry name" value="Ribosomal protein L22/L17"/>
    <property type="match status" value="1"/>
</dbReference>
<dbReference type="InterPro" id="IPR001063">
    <property type="entry name" value="Ribosomal_uL22"/>
</dbReference>
<dbReference type="InterPro" id="IPR047867">
    <property type="entry name" value="Ribosomal_uL22_bac/org-type"/>
</dbReference>
<dbReference type="InterPro" id="IPR036394">
    <property type="entry name" value="Ribosomal_uL22_sf"/>
</dbReference>
<dbReference type="PANTHER" id="PTHR13501">
    <property type="entry name" value="CHLOROPLAST 50S RIBOSOMAL PROTEIN L22-RELATED"/>
    <property type="match status" value="1"/>
</dbReference>
<dbReference type="PANTHER" id="PTHR13501:SF8">
    <property type="entry name" value="LARGE RIBOSOMAL SUBUNIT PROTEIN UL22M"/>
    <property type="match status" value="1"/>
</dbReference>
<dbReference type="Pfam" id="PF00237">
    <property type="entry name" value="Ribosomal_L22"/>
    <property type="match status" value="1"/>
</dbReference>
<dbReference type="SUPFAM" id="SSF54843">
    <property type="entry name" value="Ribosomal protein L22"/>
    <property type="match status" value="1"/>
</dbReference>
<keyword id="KW-0496">Mitochondrion</keyword>
<keyword id="KW-1185">Reference proteome</keyword>
<keyword id="KW-0687">Ribonucleoprotein</keyword>
<keyword id="KW-0689">Ribosomal protein</keyword>
<keyword id="KW-0809">Transit peptide</keyword>
<accession>Q9VXB5</accession>
<accession>Q8SZC3</accession>
<comment type="subunit">
    <text evidence="1">Component of the mitochondrial ribosome large subunit (39S) which comprises a 16S rRNA and about 50 distinct proteins.</text>
</comment>
<comment type="subcellular location">
    <subcellularLocation>
        <location evidence="1">Mitochondrion</location>
    </subcellularLocation>
</comment>
<comment type="similarity">
    <text evidence="3">Belongs to the universal ribosomal protein uL22 family.</text>
</comment>
<proteinExistence type="evidence at transcript level"/>
<evidence type="ECO:0000250" key="1">
    <source>
        <dbReference type="UniProtKB" id="Q9NWU5"/>
    </source>
</evidence>
<evidence type="ECO:0000255" key="2"/>
<evidence type="ECO:0000305" key="3"/>
<protein>
    <recommendedName>
        <fullName evidence="3">Large ribosomal subunit protein uL22m</fullName>
    </recommendedName>
    <alternativeName>
        <fullName>39S ribosomal protein L22, mitochondrial</fullName>
        <shortName>L22mt</shortName>
        <shortName>MRP-L22</shortName>
    </alternativeName>
</protein>
<gene>
    <name type="primary">mRpL22</name>
    <name type="ORF">CG4742</name>
</gene>
<sequence length="233" mass="26953">MHKVIRQMSQLRLQAPQGAALLRSADSSSISPAISPVSPPALQSKSLHTAASAGMLCAKWNKYNYGPRKWLEYNKTVHPPQETDEEPRNAYVCHMRSNIKYSPDKMWYIAAFVRGMSVDEALKQLNFVLKKGATDVKETILEAQQIAVERHNVEYKSNLWIAESFVGKGRVFKGVRRHARGRFGKVEYKHCHYFVRLEEGEPPQHYYQEPQTPEQQYESWMEQMRSRKIINSL</sequence>
<name>RM22_DROME</name>
<feature type="transit peptide" description="Mitochondrion" evidence="2">
    <location>
        <begin position="1"/>
        <end status="unknown"/>
    </location>
</feature>
<feature type="chain" id="PRO_0000323420" description="Large ribosomal subunit protein uL22m">
    <location>
        <begin status="unknown"/>
        <end position="233"/>
    </location>
</feature>
<organism>
    <name type="scientific">Drosophila melanogaster</name>
    <name type="common">Fruit fly</name>
    <dbReference type="NCBI Taxonomy" id="7227"/>
    <lineage>
        <taxon>Eukaryota</taxon>
        <taxon>Metazoa</taxon>
        <taxon>Ecdysozoa</taxon>
        <taxon>Arthropoda</taxon>
        <taxon>Hexapoda</taxon>
        <taxon>Insecta</taxon>
        <taxon>Pterygota</taxon>
        <taxon>Neoptera</taxon>
        <taxon>Endopterygota</taxon>
        <taxon>Diptera</taxon>
        <taxon>Brachycera</taxon>
        <taxon>Muscomorpha</taxon>
        <taxon>Ephydroidea</taxon>
        <taxon>Drosophilidae</taxon>
        <taxon>Drosophila</taxon>
        <taxon>Sophophora</taxon>
    </lineage>
</organism>